<keyword id="KW-0120">Carbon dioxide fixation</keyword>
<keyword id="KW-0456">Lyase</keyword>
<keyword id="KW-0460">Magnesium</keyword>
<keyword id="KW-1185">Reference proteome</keyword>
<gene>
    <name evidence="1" type="primary">ppc</name>
    <name type="ordered locus">APL_0339</name>
</gene>
<comment type="function">
    <text evidence="1">Forms oxaloacetate, a four-carbon dicarboxylic acid source for the tricarboxylic acid cycle.</text>
</comment>
<comment type="catalytic activity">
    <reaction evidence="1">
        <text>oxaloacetate + phosphate = phosphoenolpyruvate + hydrogencarbonate</text>
        <dbReference type="Rhea" id="RHEA:28370"/>
        <dbReference type="ChEBI" id="CHEBI:16452"/>
        <dbReference type="ChEBI" id="CHEBI:17544"/>
        <dbReference type="ChEBI" id="CHEBI:43474"/>
        <dbReference type="ChEBI" id="CHEBI:58702"/>
        <dbReference type="EC" id="4.1.1.31"/>
    </reaction>
</comment>
<comment type="cofactor">
    <cofactor evidence="1">
        <name>Mg(2+)</name>
        <dbReference type="ChEBI" id="CHEBI:18420"/>
    </cofactor>
</comment>
<comment type="similarity">
    <text evidence="1">Belongs to the PEPCase type 1 family.</text>
</comment>
<protein>
    <recommendedName>
        <fullName evidence="1">Phosphoenolpyruvate carboxylase</fullName>
        <shortName evidence="1">PEPC</shortName>
        <shortName evidence="1">PEPCase</shortName>
        <ecNumber evidence="1">4.1.1.31</ecNumber>
    </recommendedName>
</protein>
<evidence type="ECO:0000255" key="1">
    <source>
        <dbReference type="HAMAP-Rule" id="MF_00595"/>
    </source>
</evidence>
<sequence length="879" mass="99144">MNQPYSAMRNNIHMLGDFLGETIREAQGNEILELIESIRVLSRDSRAGDEKAREQLLDKLANISTENVLPVARAFSQFLNLTNIAEQYQTISRHHQDESLGNRSLSALFARLKAQGTPVETVIKTVEKLSIELVLTAHPTEVTRRSLVHKHVEINKCLGQLEHDDLTEAEQTKLKRRLMQLIALAWHTNEIRAARPTPVDEAKWGMAIIENSLWKAVPDFCRELNFQLEKHFDVQYEVALSPVRFSSWMGGDRDGNPFVTAEITQKVLRMNRWKAAELFLNDVSDLVEELSIVQCTPEFREKYGDHIEPYRVVVKGLRSKLQKTLTYFGELIEAKPTTVDPSEIITCDNDLWEPLYDCYQSLHACGMRIIANGSLLDCLRRIRCFGLGLSRLDIRQESSRHETAIAEITRYIGLGDYAQWTEDDKQAFLVRELSSRRPLVPTNWTPSPETQEILDTCKVVAQQPEGTISAYVISMAREASDVLAVHLLLKEAGCNYTLPVAPLFETLDDLDHSEKVMTDLFNIGWYRGVINNYQMVMIGYSDSAKDAGMLAASWAQYRAQEALVNLAEKYHIELVLFHGRGGTVGRGGAPAHAALLSQPPRSLKSGLRVTEQGEMIRFKLGLPAVAVETLNLYASAILEANLLPPPEPKQKWRDIMDKGAAISCEIYRGVVRGEPDFVPYFRSATPEQELGKLPLGSRPSKRNPNGGVESLRAIPWIFAWMQNRLMLPAWLGAGAALRQMIEQGEESTLKEMCNEWPFFSTRIGMLEMVFSKADLWLAEHYDQRLVAKELHRLGKTLRAQLSADIQTVLTLAHDGQLMADLPWIAESIALRNVYTDPLNLLQVELLQRLRSQGEVRDPQLEQALMITITGIAAGMRNTG</sequence>
<reference key="1">
    <citation type="journal article" date="2008" name="J. Bacteriol.">
        <title>The complete genome sequence of Actinobacillus pleuropneumoniae L20 (serotype 5b).</title>
        <authorList>
            <person name="Foote S.J."/>
            <person name="Bosse J.T."/>
            <person name="Bouevitch A.B."/>
            <person name="Langford P.R."/>
            <person name="Young N.M."/>
            <person name="Nash J.H.E."/>
        </authorList>
    </citation>
    <scope>NUCLEOTIDE SEQUENCE [LARGE SCALE GENOMIC DNA]</scope>
    <source>
        <strain>L20</strain>
    </source>
</reference>
<organism>
    <name type="scientific">Actinobacillus pleuropneumoniae serotype 5b (strain L20)</name>
    <dbReference type="NCBI Taxonomy" id="416269"/>
    <lineage>
        <taxon>Bacteria</taxon>
        <taxon>Pseudomonadati</taxon>
        <taxon>Pseudomonadota</taxon>
        <taxon>Gammaproteobacteria</taxon>
        <taxon>Pasteurellales</taxon>
        <taxon>Pasteurellaceae</taxon>
        <taxon>Actinobacillus</taxon>
    </lineage>
</organism>
<feature type="chain" id="PRO_1000025543" description="Phosphoenolpyruvate carboxylase">
    <location>
        <begin position="1"/>
        <end position="879"/>
    </location>
</feature>
<feature type="active site" evidence="1">
    <location>
        <position position="138"/>
    </location>
</feature>
<feature type="active site" evidence="1">
    <location>
        <position position="545"/>
    </location>
</feature>
<dbReference type="EC" id="4.1.1.31" evidence="1"/>
<dbReference type="EMBL" id="CP000569">
    <property type="protein sequence ID" value="ABN73443.1"/>
    <property type="molecule type" value="Genomic_DNA"/>
</dbReference>
<dbReference type="RefSeq" id="WP_011848359.1">
    <property type="nucleotide sequence ID" value="NC_009053.1"/>
</dbReference>
<dbReference type="SMR" id="A3MZ57"/>
<dbReference type="STRING" id="416269.APL_0339"/>
<dbReference type="EnsemblBacteria" id="ABN73443">
    <property type="protein sequence ID" value="ABN73443"/>
    <property type="gene ID" value="APL_0339"/>
</dbReference>
<dbReference type="KEGG" id="apl:APL_0339"/>
<dbReference type="PATRIC" id="fig|416269.6.peg.348"/>
<dbReference type="eggNOG" id="COG2352">
    <property type="taxonomic scope" value="Bacteria"/>
</dbReference>
<dbReference type="HOGENOM" id="CLU_006557_2_0_6"/>
<dbReference type="Proteomes" id="UP000001432">
    <property type="component" value="Chromosome"/>
</dbReference>
<dbReference type="GO" id="GO:0005829">
    <property type="term" value="C:cytosol"/>
    <property type="evidence" value="ECO:0007669"/>
    <property type="project" value="TreeGrafter"/>
</dbReference>
<dbReference type="GO" id="GO:0000287">
    <property type="term" value="F:magnesium ion binding"/>
    <property type="evidence" value="ECO:0007669"/>
    <property type="project" value="UniProtKB-UniRule"/>
</dbReference>
<dbReference type="GO" id="GO:0008964">
    <property type="term" value="F:phosphoenolpyruvate carboxylase activity"/>
    <property type="evidence" value="ECO:0007669"/>
    <property type="project" value="UniProtKB-UniRule"/>
</dbReference>
<dbReference type="GO" id="GO:0015977">
    <property type="term" value="P:carbon fixation"/>
    <property type="evidence" value="ECO:0007669"/>
    <property type="project" value="UniProtKB-UniRule"/>
</dbReference>
<dbReference type="GO" id="GO:0006107">
    <property type="term" value="P:oxaloacetate metabolic process"/>
    <property type="evidence" value="ECO:0007669"/>
    <property type="project" value="UniProtKB-UniRule"/>
</dbReference>
<dbReference type="GO" id="GO:0006099">
    <property type="term" value="P:tricarboxylic acid cycle"/>
    <property type="evidence" value="ECO:0007669"/>
    <property type="project" value="InterPro"/>
</dbReference>
<dbReference type="Gene3D" id="1.20.1440.90">
    <property type="entry name" value="Phosphoenolpyruvate/pyruvate domain"/>
    <property type="match status" value="1"/>
</dbReference>
<dbReference type="HAMAP" id="MF_00595">
    <property type="entry name" value="PEPcase_type1"/>
    <property type="match status" value="1"/>
</dbReference>
<dbReference type="InterPro" id="IPR021135">
    <property type="entry name" value="PEP_COase"/>
</dbReference>
<dbReference type="InterPro" id="IPR022805">
    <property type="entry name" value="PEP_COase_bac/pln-type"/>
</dbReference>
<dbReference type="InterPro" id="IPR018129">
    <property type="entry name" value="PEP_COase_Lys_AS"/>
</dbReference>
<dbReference type="InterPro" id="IPR033129">
    <property type="entry name" value="PEPCASE_His_AS"/>
</dbReference>
<dbReference type="InterPro" id="IPR015813">
    <property type="entry name" value="Pyrv/PenolPyrv_kinase-like_dom"/>
</dbReference>
<dbReference type="NCBIfam" id="NF000584">
    <property type="entry name" value="PRK00009.1"/>
    <property type="match status" value="1"/>
</dbReference>
<dbReference type="PANTHER" id="PTHR30523">
    <property type="entry name" value="PHOSPHOENOLPYRUVATE CARBOXYLASE"/>
    <property type="match status" value="1"/>
</dbReference>
<dbReference type="PANTHER" id="PTHR30523:SF6">
    <property type="entry name" value="PHOSPHOENOLPYRUVATE CARBOXYLASE"/>
    <property type="match status" value="1"/>
</dbReference>
<dbReference type="Pfam" id="PF00311">
    <property type="entry name" value="PEPcase"/>
    <property type="match status" value="1"/>
</dbReference>
<dbReference type="PRINTS" id="PR00150">
    <property type="entry name" value="PEPCARBXLASE"/>
</dbReference>
<dbReference type="SUPFAM" id="SSF51621">
    <property type="entry name" value="Phosphoenolpyruvate/pyruvate domain"/>
    <property type="match status" value="1"/>
</dbReference>
<dbReference type="PROSITE" id="PS00781">
    <property type="entry name" value="PEPCASE_1"/>
    <property type="match status" value="1"/>
</dbReference>
<dbReference type="PROSITE" id="PS00393">
    <property type="entry name" value="PEPCASE_2"/>
    <property type="match status" value="1"/>
</dbReference>
<name>CAPP_ACTP2</name>
<proteinExistence type="inferred from homology"/>
<accession>A3MZ57</accession>